<comment type="similarity">
    <text evidence="1">Belongs to the TCL1 family.</text>
</comment>
<gene>
    <name type="primary">Tcl1b4</name>
</gene>
<evidence type="ECO:0000305" key="1"/>
<proteinExistence type="evidence at transcript level"/>
<dbReference type="EMBL" id="AF195492">
    <property type="protein sequence ID" value="AAF12805.1"/>
    <property type="molecule type" value="mRNA"/>
</dbReference>
<dbReference type="CCDS" id="CCDS36548.1"/>
<dbReference type="RefSeq" id="NP_038802.1">
    <property type="nucleotide sequence ID" value="NM_013774.3"/>
</dbReference>
<dbReference type="SMR" id="P56844"/>
<dbReference type="FunCoup" id="P56844">
    <property type="interactions" value="337"/>
</dbReference>
<dbReference type="STRING" id="10090.ENSMUSP00000000718"/>
<dbReference type="PaxDb" id="10090-ENSMUSP00000000718"/>
<dbReference type="DNASU" id="27380"/>
<dbReference type="Ensembl" id="ENSMUST00000000718.7">
    <property type="protein sequence ID" value="ENSMUSP00000000718.7"/>
    <property type="gene ID" value="ENSMUSG00000079007.5"/>
</dbReference>
<dbReference type="GeneID" id="27380"/>
<dbReference type="KEGG" id="mmu:27380"/>
<dbReference type="UCSC" id="uc007oyb.1">
    <property type="organism name" value="mouse"/>
</dbReference>
<dbReference type="AGR" id="MGI:1351604"/>
<dbReference type="CTD" id="27380"/>
<dbReference type="MGI" id="MGI:1351604">
    <property type="gene designation" value="Tcl1b4"/>
</dbReference>
<dbReference type="VEuPathDB" id="HostDB:ENSMUSG00000079007"/>
<dbReference type="eggNOG" id="ENOG502TEDJ">
    <property type="taxonomic scope" value="Eukaryota"/>
</dbReference>
<dbReference type="GeneTree" id="ENSGT00390000006885"/>
<dbReference type="HOGENOM" id="CLU_168379_1_0_1"/>
<dbReference type="InParanoid" id="P56844"/>
<dbReference type="PhylomeDB" id="P56844"/>
<dbReference type="TreeFam" id="TF340217"/>
<dbReference type="BioGRID-ORCS" id="27380">
    <property type="hits" value="2 hits in 77 CRISPR screens"/>
</dbReference>
<dbReference type="ChiTaRS" id="Tcl1b4">
    <property type="organism name" value="mouse"/>
</dbReference>
<dbReference type="PRO" id="PR:P56844"/>
<dbReference type="Proteomes" id="UP000000589">
    <property type="component" value="Chromosome 12"/>
</dbReference>
<dbReference type="RNAct" id="P56844">
    <property type="molecule type" value="protein"/>
</dbReference>
<dbReference type="Bgee" id="ENSMUSG00000079007">
    <property type="expression patterns" value="Expressed in animal zygote and 8 other cell types or tissues"/>
</dbReference>
<dbReference type="ExpressionAtlas" id="P56844">
    <property type="expression patterns" value="baseline and differential"/>
</dbReference>
<dbReference type="GO" id="GO:0043539">
    <property type="term" value="F:protein serine/threonine kinase activator activity"/>
    <property type="evidence" value="ECO:0007669"/>
    <property type="project" value="InterPro"/>
</dbReference>
<dbReference type="FunFam" id="2.40.15.10:FF:000004">
    <property type="entry name" value="Protein TCL1B4"/>
    <property type="match status" value="1"/>
</dbReference>
<dbReference type="Gene3D" id="2.40.15.10">
    <property type="entry name" value="TCL1/MTCP1"/>
    <property type="match status" value="1"/>
</dbReference>
<dbReference type="InterPro" id="IPR004832">
    <property type="entry name" value="TCL1_MTCP1"/>
</dbReference>
<dbReference type="InterPro" id="IPR036672">
    <property type="entry name" value="TCL1_MTCP1_sf"/>
</dbReference>
<dbReference type="PANTHER" id="PTHR14060">
    <property type="entry name" value="PROTEIN P13 MTCP-1"/>
    <property type="match status" value="1"/>
</dbReference>
<dbReference type="PANTHER" id="PTHR14060:SF2">
    <property type="entry name" value="T-CELL LEUKEMIA_LYMPHOMA PROTEIN 1B"/>
    <property type="match status" value="1"/>
</dbReference>
<dbReference type="Pfam" id="PF01840">
    <property type="entry name" value="TCL1_MTCP1"/>
    <property type="match status" value="1"/>
</dbReference>
<dbReference type="SUPFAM" id="SSF50904">
    <property type="entry name" value="Oncogene products"/>
    <property type="match status" value="1"/>
</dbReference>
<accession>P56844</accession>
<name>TCLB4_MOUSE</name>
<sequence>MADSVRFPCMPFPPCFLVCTRDDIYEDEHGRQWVAAKVETSSHSPYCSKIETCVTVHLWQMTTLFQEPSPDSLKTFNFLPRTWRLESRNTYRGADAMHWRLVNHSQFYGTEELVLMLDSR</sequence>
<organism>
    <name type="scientific">Mus musculus</name>
    <name type="common">Mouse</name>
    <dbReference type="NCBI Taxonomy" id="10090"/>
    <lineage>
        <taxon>Eukaryota</taxon>
        <taxon>Metazoa</taxon>
        <taxon>Chordata</taxon>
        <taxon>Craniata</taxon>
        <taxon>Vertebrata</taxon>
        <taxon>Euteleostomi</taxon>
        <taxon>Mammalia</taxon>
        <taxon>Eutheria</taxon>
        <taxon>Euarchontoglires</taxon>
        <taxon>Glires</taxon>
        <taxon>Rodentia</taxon>
        <taxon>Myomorpha</taxon>
        <taxon>Muroidea</taxon>
        <taxon>Muridae</taxon>
        <taxon>Murinae</taxon>
        <taxon>Mus</taxon>
        <taxon>Mus</taxon>
    </lineage>
</organism>
<feature type="chain" id="PRO_0000184494" description="Protein TCL1B4">
    <location>
        <begin position="1"/>
        <end position="120"/>
    </location>
</feature>
<protein>
    <recommendedName>
        <fullName>Protein TCL1B4</fullName>
    </recommendedName>
</protein>
<keyword id="KW-1185">Reference proteome</keyword>
<reference key="1">
    <citation type="journal article" date="1999" name="Proc. Natl. Acad. Sci. U.S.A.">
        <title>Genomic analysis of human and mouse TCL1 loci reveals a complex of tightly clustered genes.</title>
        <authorList>
            <person name="Hallas C."/>
            <person name="Pekarsky Y."/>
            <person name="Itoyama T."/>
            <person name="Varnum J."/>
            <person name="Bichi R."/>
            <person name="Rothstein J.L."/>
            <person name="Croce C.M."/>
        </authorList>
    </citation>
    <scope>NUCLEOTIDE SEQUENCE [MRNA]</scope>
</reference>